<protein>
    <recommendedName>
        <fullName>Dysferlin</fullName>
    </recommendedName>
    <alternativeName>
        <fullName>Dystrophy-associated fer-1-like protein</fullName>
    </alternativeName>
    <alternativeName>
        <fullName>Fer-1-like protein 1</fullName>
    </alternativeName>
</protein>
<gene>
    <name type="primary">DYSF</name>
    <name type="synonym">FER1L1</name>
</gene>
<proteinExistence type="evidence at transcript level"/>
<dbReference type="EMBL" id="BC149938">
    <property type="protein sequence ID" value="AAI49939.1"/>
    <property type="molecule type" value="mRNA"/>
</dbReference>
<dbReference type="RefSeq" id="NP_001095960.1">
    <property type="nucleotide sequence ID" value="NM_001102490.2"/>
</dbReference>
<dbReference type="SMR" id="A6QQP7"/>
<dbReference type="FunCoup" id="A6QQP7">
    <property type="interactions" value="272"/>
</dbReference>
<dbReference type="STRING" id="9913.ENSBTAP00000033077"/>
<dbReference type="SwissPalm" id="A6QQP7"/>
<dbReference type="PaxDb" id="9913-ENSBTAP00000033077"/>
<dbReference type="PeptideAtlas" id="A6QQP7"/>
<dbReference type="GeneID" id="508157"/>
<dbReference type="KEGG" id="bta:508157"/>
<dbReference type="CTD" id="8291"/>
<dbReference type="eggNOG" id="KOG1326">
    <property type="taxonomic scope" value="Eukaryota"/>
</dbReference>
<dbReference type="InParanoid" id="A6QQP7"/>
<dbReference type="OrthoDB" id="10059618at2759"/>
<dbReference type="Proteomes" id="UP000009136">
    <property type="component" value="Unplaced"/>
</dbReference>
<dbReference type="GO" id="GO:0031410">
    <property type="term" value="C:cytoplasmic vesicle"/>
    <property type="evidence" value="ECO:0000318"/>
    <property type="project" value="GO_Central"/>
</dbReference>
<dbReference type="GO" id="GO:0030659">
    <property type="term" value="C:cytoplasmic vesicle membrane"/>
    <property type="evidence" value="ECO:0007669"/>
    <property type="project" value="UniProtKB-SubCell"/>
</dbReference>
<dbReference type="GO" id="GO:0005886">
    <property type="term" value="C:plasma membrane"/>
    <property type="evidence" value="ECO:0000250"/>
    <property type="project" value="UniProtKB"/>
</dbReference>
<dbReference type="GO" id="GO:0042383">
    <property type="term" value="C:sarcolemma"/>
    <property type="evidence" value="ECO:0000250"/>
    <property type="project" value="UniProtKB"/>
</dbReference>
<dbReference type="GO" id="GO:0030315">
    <property type="term" value="C:T-tubule"/>
    <property type="evidence" value="ECO:0000318"/>
    <property type="project" value="GO_Central"/>
</dbReference>
<dbReference type="GO" id="GO:0005509">
    <property type="term" value="F:calcium ion binding"/>
    <property type="evidence" value="ECO:0000250"/>
    <property type="project" value="UniProtKB"/>
</dbReference>
<dbReference type="GO" id="GO:0005543">
    <property type="term" value="F:phospholipid binding"/>
    <property type="evidence" value="ECO:0000250"/>
    <property type="project" value="UniProtKB"/>
</dbReference>
<dbReference type="GO" id="GO:0061025">
    <property type="term" value="P:membrane fusion"/>
    <property type="evidence" value="ECO:0000318"/>
    <property type="project" value="GO_Central"/>
</dbReference>
<dbReference type="GO" id="GO:0001778">
    <property type="term" value="P:plasma membrane repair"/>
    <property type="evidence" value="ECO:0000318"/>
    <property type="project" value="GO_Central"/>
</dbReference>
<dbReference type="GO" id="GO:0033292">
    <property type="term" value="P:T-tubule organization"/>
    <property type="evidence" value="ECO:0000318"/>
    <property type="project" value="GO_Central"/>
</dbReference>
<dbReference type="GO" id="GO:0006906">
    <property type="term" value="P:vesicle fusion"/>
    <property type="evidence" value="ECO:0000250"/>
    <property type="project" value="UniProtKB"/>
</dbReference>
<dbReference type="CDD" id="cd08373">
    <property type="entry name" value="C2A_Ferlin"/>
    <property type="match status" value="1"/>
</dbReference>
<dbReference type="CDD" id="cd04011">
    <property type="entry name" value="C2B_Ferlin"/>
    <property type="match status" value="1"/>
</dbReference>
<dbReference type="CDD" id="cd04018">
    <property type="entry name" value="C2C_Ferlin"/>
    <property type="match status" value="1"/>
</dbReference>
<dbReference type="CDD" id="cd04017">
    <property type="entry name" value="C2D_Ferlin"/>
    <property type="match status" value="1"/>
</dbReference>
<dbReference type="CDD" id="cd04037">
    <property type="entry name" value="C2E_Ferlin"/>
    <property type="match status" value="1"/>
</dbReference>
<dbReference type="CDD" id="cd08374">
    <property type="entry name" value="C2F_Ferlin"/>
    <property type="match status" value="1"/>
</dbReference>
<dbReference type="FunFam" id="2.60.40.150:FF:000009">
    <property type="entry name" value="dysferlin isoform X2"/>
    <property type="match status" value="1"/>
</dbReference>
<dbReference type="FunFam" id="2.60.40.150:FF:000021">
    <property type="entry name" value="dysferlin isoform X2"/>
    <property type="match status" value="1"/>
</dbReference>
<dbReference type="FunFam" id="2.60.40.150:FF:000026">
    <property type="entry name" value="dysferlin isoform X2"/>
    <property type="match status" value="1"/>
</dbReference>
<dbReference type="FunFam" id="2.60.40.150:FF:000033">
    <property type="entry name" value="dysferlin isoform X2"/>
    <property type="match status" value="1"/>
</dbReference>
<dbReference type="FunFam" id="2.60.40.150:FF:000037">
    <property type="entry name" value="dysferlin isoform X2"/>
    <property type="match status" value="1"/>
</dbReference>
<dbReference type="FunFam" id="2.60.40.150:FF:000061">
    <property type="entry name" value="dysferlin isoform X8"/>
    <property type="match status" value="1"/>
</dbReference>
<dbReference type="Gene3D" id="2.60.40.150">
    <property type="entry name" value="C2 domain"/>
    <property type="match status" value="6"/>
</dbReference>
<dbReference type="InterPro" id="IPR000008">
    <property type="entry name" value="C2_dom"/>
</dbReference>
<dbReference type="InterPro" id="IPR035892">
    <property type="entry name" value="C2_domain_sf"/>
</dbReference>
<dbReference type="InterPro" id="IPR037726">
    <property type="entry name" value="C2A_Ferlin"/>
</dbReference>
<dbReference type="InterPro" id="IPR037720">
    <property type="entry name" value="C2B_Ferlin"/>
</dbReference>
<dbReference type="InterPro" id="IPR037722">
    <property type="entry name" value="C2C_Ferlin"/>
</dbReference>
<dbReference type="InterPro" id="IPR037723">
    <property type="entry name" value="C2D_Ferlin"/>
</dbReference>
<dbReference type="InterPro" id="IPR037724">
    <property type="entry name" value="C2E_Ferlin"/>
</dbReference>
<dbReference type="InterPro" id="IPR037725">
    <property type="entry name" value="C2F_Ferlin"/>
</dbReference>
<dbReference type="InterPro" id="IPR012968">
    <property type="entry name" value="FerIin_dom"/>
</dbReference>
<dbReference type="InterPro" id="IPR037721">
    <property type="entry name" value="Ferlin"/>
</dbReference>
<dbReference type="InterPro" id="IPR012560">
    <property type="entry name" value="Ferlin_A-domain"/>
</dbReference>
<dbReference type="InterPro" id="IPR012561">
    <property type="entry name" value="Ferlin_B-domain"/>
</dbReference>
<dbReference type="InterPro" id="IPR032362">
    <property type="entry name" value="Ferlin_C"/>
</dbReference>
<dbReference type="InterPro" id="IPR055072">
    <property type="entry name" value="Ferlin_DSRM"/>
</dbReference>
<dbReference type="InterPro" id="IPR006614">
    <property type="entry name" value="Peroxin/Ferlin"/>
</dbReference>
<dbReference type="PANTHER" id="PTHR12546:SF44">
    <property type="entry name" value="DYSFERLIN"/>
    <property type="match status" value="1"/>
</dbReference>
<dbReference type="PANTHER" id="PTHR12546">
    <property type="entry name" value="FER-1-LIKE"/>
    <property type="match status" value="1"/>
</dbReference>
<dbReference type="Pfam" id="PF00168">
    <property type="entry name" value="C2"/>
    <property type="match status" value="7"/>
</dbReference>
<dbReference type="Pfam" id="PF22901">
    <property type="entry name" value="dsrm_Ferlin"/>
    <property type="match status" value="1"/>
</dbReference>
<dbReference type="Pfam" id="PF08165">
    <property type="entry name" value="FerA"/>
    <property type="match status" value="1"/>
</dbReference>
<dbReference type="Pfam" id="PF08150">
    <property type="entry name" value="FerB"/>
    <property type="match status" value="1"/>
</dbReference>
<dbReference type="Pfam" id="PF08151">
    <property type="entry name" value="FerI"/>
    <property type="match status" value="1"/>
</dbReference>
<dbReference type="Pfam" id="PF16165">
    <property type="entry name" value="Ferlin_C"/>
    <property type="match status" value="1"/>
</dbReference>
<dbReference type="SMART" id="SM00239">
    <property type="entry name" value="C2"/>
    <property type="match status" value="7"/>
</dbReference>
<dbReference type="SMART" id="SM00694">
    <property type="entry name" value="DysFC"/>
    <property type="match status" value="2"/>
</dbReference>
<dbReference type="SMART" id="SM00693">
    <property type="entry name" value="DysFN"/>
    <property type="match status" value="2"/>
</dbReference>
<dbReference type="SMART" id="SM01200">
    <property type="entry name" value="FerA"/>
    <property type="match status" value="1"/>
</dbReference>
<dbReference type="SMART" id="SM01201">
    <property type="entry name" value="FerB"/>
    <property type="match status" value="1"/>
</dbReference>
<dbReference type="SMART" id="SM01202">
    <property type="entry name" value="FerI"/>
    <property type="match status" value="1"/>
</dbReference>
<dbReference type="SUPFAM" id="SSF49562">
    <property type="entry name" value="C2 domain (Calcium/lipid-binding domain, CaLB)"/>
    <property type="match status" value="7"/>
</dbReference>
<dbReference type="PROSITE" id="PS50004">
    <property type="entry name" value="C2"/>
    <property type="match status" value="7"/>
</dbReference>
<name>DYSF_BOVIN</name>
<reference key="1">
    <citation type="submission" date="2007-07" db="EMBL/GenBank/DDBJ databases">
        <authorList>
            <consortium name="NIH - Mammalian Gene Collection (MGC) project"/>
        </authorList>
    </citation>
    <scope>NUCLEOTIDE SEQUENCE [LARGE SCALE MRNA]</scope>
    <source>
        <strain>Hereford</strain>
        <tissue>Hypothalamus</tissue>
    </source>
</reference>
<accession>A6QQP7</accession>
<comment type="function">
    <text evidence="1">Key calcium ion sensor involved in the Ca(2+)-triggered synaptic vesicle-plasma membrane fusion. Plays a role in the sarcolemma repair mechanism of both skeletal muscle and cardiomyocytes that permits rapid resealing of membranes disrupted by mechanical stress (By similarity).</text>
</comment>
<comment type="cofactor">
    <cofactor evidence="4">
        <name>Ca(2+)</name>
        <dbReference type="ChEBI" id="CHEBI:29108"/>
    </cofactor>
</comment>
<comment type="subunit">
    <text evidence="2">Interacts with CACNA1S, CAV3 and PARVB. Interacts with ANXA1; the interaction is Ca(2+)- and injury state-dependent. Interacts with ANXA2; the interaction is Ca(2+)- and injury state-dependent. Interacts with AHNAK; the interaction is direct and Ca(2+)-independent. Interacts with AHNAK2; the interaction is direct and Ca(2+)-independent. Interacts with TRIM72/MG53; interaction is required for transport to sites of cell injury during repair patch formation (By similarity). Interacts with RIPOR2; this interaction occurs during early myogenic differentiation (By similarity).</text>
</comment>
<comment type="subcellular location">
    <subcellularLocation>
        <location>Cell membrane</location>
        <location>Sarcolemma</location>
        <topology>Single-pass type II membrane protein</topology>
    </subcellularLocation>
    <subcellularLocation>
        <location evidence="1">Cytoplasmic vesicle membrane</location>
        <topology evidence="1">Single-pass type II membrane protein</topology>
    </subcellularLocation>
    <subcellularLocation>
        <location evidence="1">Cell membrane</location>
    </subcellularLocation>
    <text evidence="1">Colocalizes, during muscle differentiation, with BIN1 in the T-tubule system of myotubules and at the site of contact between two myotubes or a myoblast and a myotube. Wounding of myotubes led to its focal enrichment to the site of injury and to its relocalization in a Ca(2+)-dependent manner toward the plasma membrane. Colocalizes with AHNAK, AHNAK2 and PARVB at the sarcolemma of skeletal muscle. Detected on the apical plasma membrane of the syncytiotrophoblast. Reaches the plasmma membrane through a caveolin-independent mechanism. Retained by caveolin at the plasmma membrane (By similarity). Colocalizes, during muscle differentiation, with CACNA1S in the T-tubule system of myotubules (By similarity). Accumulates and colocalizes with fusion vesicles at the sarcolemma disruption sites (By similarity).</text>
</comment>
<comment type="domain">
    <text evidence="1">All seven C2 domains associate with lipid membranes in a calcium-dependent manner. Domains C2 1 and 3 have the highest affinity for calcium, the C2 domain 1 seems to be largely unstructured in the absence of bound ligands (By similarity).</text>
</comment>
<comment type="similarity">
    <text evidence="6">Belongs to the ferlin family.</text>
</comment>
<sequence>MLRVFILYAENVHTPDTDISDAYCSAVFAGVKKRTKVIKNNVNPVWNEGFEWDLKGIPLDQGSELLVVVKDHETMGRNRFLGEANIPLREVLATPSLSASFNAPLLDTKKQPTGASLVLQVSYTPLPGAVPTFPPLTPLEPSPTLPDMDTVADTGGEEDTEDQGLTGDEAEPFLDQSGALGPGAPSTPKKQPSHPPPYHPGGGRKRSAPAPSKPLSDKPQDFQIRVQVIKGRQLPGVNIKPVVKVTAAGQTKRTRIHKGNSPVFNETLFFNVFDSPAELFNEPIFITVVDSRSLRTDALIGEFRLDVGSIYREPRHAYLRKWLLLSDPDDFSAGARGYLKASLCVLGPGDEAPLERKDPSEDKEDIESNLLRPIGVALRGAHFCLKVFRAEDLPQMDDAVMDNVRQIFGFDSNKKNLVDPFVEVSFAGKMLCSKILEKTANPQWNQSITLPAMFPSMCEKMRIRVVDWDRLTHNDIVATTYLSMSKISASGGEIEEEPAGVVKPPPATELDDHLGFLPTFGPCYINLYGSPREFTGFPDPYAELNTGKGEGVAYRGRLLLSLETKLVERSEQKVEALSADDILRVEKYLRRRKYSLFAAFYSATMLQDVDDAVQFEVSIGNYGNKFDTTCLPLASTTQYSRAVFDGCHYYYLPWGNVKPVVVLSSYWEDIRHRVEAQNQLLRIADQLEAGLEQVHLALKAQCSDEDVDSLVAQLMDELIAGCSQPLGDVQEMPSATHLDQYLYQLRTRHLSQITEAAQALKLGHSELPAALEQAEDWLLRLRALADEPQNSLPDIVIWMLQGDKRVAYQRVPAHEVLFSRRGTSYCGKNCGKLQTIFLKYPMEGVPRARMPVQIRVRLWFGLSVDEKEFNQFAEGKLSVFAETYENQTKLALVGNWGTTGLTYPKFSDITGRIKLPKDSFRPSAGWAWAGDWFVCPEKTLLHDTDAGHLSFVEEVFENQTRLPGGQWIYMSDNYTDVNGEKVLPKDDIECPLGWKWEDEEWSTDLNRAVDEQGWEYSITIPPDRKPRHWVPAEKMYYTHRRRRWVRLRRRDLSQMEALKRHRQAEAEGEGWEYASLFGWKFHLEYRKTDAFRRRRWRRRMEPLEKTGPAAVFALEGALGGVVDDRSEDSVSVSTLSFGVNRPTISCIFDYGNRYHLRCYMYQARDLPAMDKDSFSDPYAVVSFLHQSQKTVVAKNTLNPTWDQTLIFYEIEIFGEPSSIAEQPPSIVVELYDHDTYGVDEFMGRCICQPSLERTPRLAWFPLTRGSQPAGELLASFELIQREKPAIHHIPGFEVQDTTGILEESEDTDLPYPPPQREANIYMVPQNIKPVLQRTAIEILAWGLRNMKSYQLASVSSPSLVVECGGQSVQSCVIKNLRKNPNFDICTLFMEVMLPREELYCPPIVVKVIDNRQFGRRPVVGQCTIRSLEGFLCDPYSEESPSPQGGPDDVSLLSPGEDVLIDIDDKEPLIPIQFADGLSGLAPTNMASSPSSLHKILLEEEFIDWWSKFFASIGESEKCGSYLEKDFDTLKVYDTSLENVKAFEGLSDFCNTFKLYRGKTQEETEDPSVIGEFKGLFKIYPLPEDPAIPLPPRQFHQLASQGPQECLVRVYIIRAFGLQPKDPNGKCDPYIKISIGKKSVSDQDSYIPCTLEPVFGKMFELTCTLPLEKDLKVTLYDYDLLSKDEKIGETVIDLENRLLSKFGARCGLPQTYCVSGPNQWRDQLRPSQLLHLFCQQHRVKAPVYRTDRVVFQDKEYTVEEIEAGRVPNPHLGPVEERLALHVLQQQGLIPEHVESRPLYSPLQPDIEQGKLQMWVDLFPKALGRPGPPFNITPRRARRFFLRCIIWNTKDVILDDLSITGEKMSDIYVKGWMVGFEEHKQKTDVHYRSLGGEGNFNWRFVFPFDYLPAEQVCTVSKKDAFWRLDKTESKIPARVVFQIWDNDKFSFDDFLGSLQLDLNHMPKPAKTAEKCSADQLEDTFHPERFVSLFEQKTVKGWWPCVAEEGEKKILAGKLEMTLEIVTESEHEERPAGHGRDEPNMNPKLEDPRRPDTSFLWFTSPYKTMKFILWRRFRCAIIFFLILFIFLLFLGIFVYSFPNYAAMKLVKPFS</sequence>
<organism>
    <name type="scientific">Bos taurus</name>
    <name type="common">Bovine</name>
    <dbReference type="NCBI Taxonomy" id="9913"/>
    <lineage>
        <taxon>Eukaryota</taxon>
        <taxon>Metazoa</taxon>
        <taxon>Chordata</taxon>
        <taxon>Craniata</taxon>
        <taxon>Vertebrata</taxon>
        <taxon>Euteleostomi</taxon>
        <taxon>Mammalia</taxon>
        <taxon>Eutheria</taxon>
        <taxon>Laurasiatheria</taxon>
        <taxon>Artiodactyla</taxon>
        <taxon>Ruminantia</taxon>
        <taxon>Pecora</taxon>
        <taxon>Bovidae</taxon>
        <taxon>Bovinae</taxon>
        <taxon>Bos</taxon>
    </lineage>
</organism>
<feature type="chain" id="PRO_0000355560" description="Dysferlin">
    <location>
        <begin position="1"/>
        <end position="2107"/>
    </location>
</feature>
<feature type="transmembrane region" description="Helical" evidence="3">
    <location>
        <begin position="2074"/>
        <end position="2094"/>
    </location>
</feature>
<feature type="domain" description="C2 1" evidence="4">
    <location>
        <begin position="1"/>
        <end position="101"/>
    </location>
</feature>
<feature type="domain" description="C2 2" evidence="4">
    <location>
        <begin position="205"/>
        <end position="323"/>
    </location>
</feature>
<feature type="domain" description="C2 3" evidence="4">
    <location>
        <begin position="362"/>
        <end position="498"/>
    </location>
</feature>
<feature type="domain" description="C2 4" evidence="4">
    <location>
        <begin position="1138"/>
        <end position="1264"/>
    </location>
</feature>
<feature type="domain" description="C2 5" evidence="4">
    <location>
        <begin position="1312"/>
        <end position="1440"/>
    </location>
</feature>
<feature type="domain" description="C2 6" evidence="4">
    <location>
        <begin position="1588"/>
        <end position="1706"/>
    </location>
</feature>
<feature type="domain" description="C2 7" evidence="4">
    <location>
        <begin position="1822"/>
        <end position="1970"/>
    </location>
</feature>
<feature type="region of interest" description="Disordered" evidence="5">
    <location>
        <begin position="132"/>
        <end position="221"/>
    </location>
</feature>
<feature type="region of interest" description="Disordered" evidence="5">
    <location>
        <begin position="2021"/>
        <end position="2044"/>
    </location>
</feature>
<feature type="compositionally biased region" description="Pro residues" evidence="5">
    <location>
        <begin position="132"/>
        <end position="144"/>
    </location>
</feature>
<feature type="compositionally biased region" description="Acidic residues" evidence="5">
    <location>
        <begin position="155"/>
        <end position="172"/>
    </location>
</feature>
<feature type="binding site" evidence="1">
    <location>
        <position position="18"/>
    </location>
    <ligand>
        <name>Ca(2+)</name>
        <dbReference type="ChEBI" id="CHEBI:29108"/>
        <label>1</label>
    </ligand>
</feature>
<feature type="binding site" evidence="1">
    <location>
        <position position="19"/>
    </location>
    <ligand>
        <name>Ca(2+)</name>
        <dbReference type="ChEBI" id="CHEBI:29108"/>
        <label>1</label>
    </ligand>
</feature>
<feature type="binding site" evidence="1">
    <location>
        <position position="21"/>
    </location>
    <ligand>
        <name>Ca(2+)</name>
        <dbReference type="ChEBI" id="CHEBI:29108"/>
        <label>1</label>
    </ligand>
</feature>
<feature type="binding site" evidence="1">
    <location>
        <position position="40"/>
    </location>
    <ligand>
        <name>Ca(2+)</name>
        <dbReference type="ChEBI" id="CHEBI:29108"/>
        <label>1</label>
    </ligand>
</feature>
<feature type="binding site" evidence="4">
    <location>
        <position position="411"/>
    </location>
    <ligand>
        <name>Ca(2+)</name>
        <dbReference type="ChEBI" id="CHEBI:29108"/>
        <label>2</label>
    </ligand>
</feature>
<feature type="binding site" evidence="4">
    <location>
        <position position="411"/>
    </location>
    <ligand>
        <name>Ca(2+)</name>
        <dbReference type="ChEBI" id="CHEBI:29108"/>
        <label>3</label>
    </ligand>
</feature>
<feature type="binding site" evidence="4">
    <location>
        <position position="419"/>
    </location>
    <ligand>
        <name>Ca(2+)</name>
        <dbReference type="ChEBI" id="CHEBI:29108"/>
        <label>2</label>
    </ligand>
</feature>
<feature type="binding site" evidence="4">
    <location>
        <position position="467"/>
    </location>
    <ligand>
        <name>Ca(2+)</name>
        <dbReference type="ChEBI" id="CHEBI:29108"/>
        <label>2</label>
    </ligand>
</feature>
<feature type="binding site" evidence="4">
    <location>
        <position position="467"/>
    </location>
    <ligand>
        <name>Ca(2+)</name>
        <dbReference type="ChEBI" id="CHEBI:29108"/>
        <label>3</label>
    </ligand>
</feature>
<feature type="binding site" evidence="4">
    <location>
        <position position="469"/>
    </location>
    <ligand>
        <name>Ca(2+)</name>
        <dbReference type="ChEBI" id="CHEBI:29108"/>
        <label>2</label>
    </ligand>
</feature>
<feature type="binding site" evidence="4">
    <location>
        <position position="469"/>
    </location>
    <ligand>
        <name>Ca(2+)</name>
        <dbReference type="ChEBI" id="CHEBI:29108"/>
        <label>3</label>
    </ligand>
</feature>
<feature type="binding site" evidence="4">
    <location>
        <position position="475"/>
    </location>
    <ligand>
        <name>Ca(2+)</name>
        <dbReference type="ChEBI" id="CHEBI:29108"/>
        <label>3</label>
    </ligand>
</feature>
<feature type="binding site" evidence="4">
    <location>
        <position position="1170"/>
    </location>
    <ligand>
        <name>Ca(2+)</name>
        <dbReference type="ChEBI" id="CHEBI:29108"/>
        <label>4</label>
    </ligand>
</feature>
<feature type="binding site" evidence="4">
    <location>
        <position position="1176"/>
    </location>
    <ligand>
        <name>Ca(2+)</name>
        <dbReference type="ChEBI" id="CHEBI:29108"/>
        <label>4</label>
    </ligand>
</feature>
<feature type="binding site" evidence="4">
    <location>
        <position position="1232"/>
    </location>
    <ligand>
        <name>Ca(2+)</name>
        <dbReference type="ChEBI" id="CHEBI:29108"/>
        <label>4</label>
    </ligand>
</feature>
<feature type="binding site" evidence="4">
    <location>
        <position position="1234"/>
    </location>
    <ligand>
        <name>Ca(2+)</name>
        <dbReference type="ChEBI" id="CHEBI:29108"/>
        <label>4</label>
    </ligand>
</feature>
<feature type="binding site" evidence="4">
    <location>
        <position position="1621"/>
    </location>
    <ligand>
        <name>Ca(2+)</name>
        <dbReference type="ChEBI" id="CHEBI:29108"/>
        <label>5</label>
    </ligand>
</feature>
<feature type="binding site" evidence="4">
    <location>
        <position position="1627"/>
    </location>
    <ligand>
        <name>Ca(2+)</name>
        <dbReference type="ChEBI" id="CHEBI:29108"/>
        <label>5</label>
    </ligand>
</feature>
<feature type="binding site" evidence="4">
    <location>
        <position position="1676"/>
    </location>
    <ligand>
        <name>Ca(2+)</name>
        <dbReference type="ChEBI" id="CHEBI:29108"/>
        <label>5</label>
    </ligand>
</feature>
<feature type="binding site" evidence="4">
    <location>
        <position position="1678"/>
    </location>
    <ligand>
        <name>Ca(2+)</name>
        <dbReference type="ChEBI" id="CHEBI:29108"/>
        <label>5</label>
    </ligand>
</feature>
<feature type="binding site" evidence="4">
    <location>
        <position position="1941"/>
    </location>
    <ligand>
        <name>Ca(2+)</name>
        <dbReference type="ChEBI" id="CHEBI:29108"/>
        <label>6</label>
    </ligand>
</feature>
<feature type="binding site" evidence="4">
    <location>
        <position position="1944"/>
    </location>
    <ligand>
        <name>Ca(2+)</name>
        <dbReference type="ChEBI" id="CHEBI:29108"/>
        <label>6</label>
    </ligand>
</feature>
<feature type="binding site" evidence="4">
    <location>
        <position position="1947"/>
    </location>
    <ligand>
        <name>Ca(2+)</name>
        <dbReference type="ChEBI" id="CHEBI:29108"/>
        <label>6</label>
    </ligand>
</feature>
<feature type="modified residue" description="Phosphothreonine" evidence="2">
    <location>
        <position position="166"/>
    </location>
</feature>
<evidence type="ECO:0000250" key="1"/>
<evidence type="ECO:0000250" key="2">
    <source>
        <dbReference type="UniProtKB" id="O75923"/>
    </source>
</evidence>
<evidence type="ECO:0000255" key="3"/>
<evidence type="ECO:0000255" key="4">
    <source>
        <dbReference type="PROSITE-ProRule" id="PRU00041"/>
    </source>
</evidence>
<evidence type="ECO:0000256" key="5">
    <source>
        <dbReference type="SAM" id="MobiDB-lite"/>
    </source>
</evidence>
<evidence type="ECO:0000305" key="6"/>
<keyword id="KW-0106">Calcium</keyword>
<keyword id="KW-1003">Cell membrane</keyword>
<keyword id="KW-0968">Cytoplasmic vesicle</keyword>
<keyword id="KW-0446">Lipid-binding</keyword>
<keyword id="KW-0472">Membrane</keyword>
<keyword id="KW-0479">Metal-binding</keyword>
<keyword id="KW-0597">Phosphoprotein</keyword>
<keyword id="KW-1185">Reference proteome</keyword>
<keyword id="KW-0677">Repeat</keyword>
<keyword id="KW-0735">Signal-anchor</keyword>
<keyword id="KW-0812">Transmembrane</keyword>
<keyword id="KW-1133">Transmembrane helix</keyword>